<proteinExistence type="inferred from homology"/>
<reference key="1">
    <citation type="journal article" date="2009" name="PLoS Genet.">
        <title>Organised genome dynamics in the Escherichia coli species results in highly diverse adaptive paths.</title>
        <authorList>
            <person name="Touchon M."/>
            <person name="Hoede C."/>
            <person name="Tenaillon O."/>
            <person name="Barbe V."/>
            <person name="Baeriswyl S."/>
            <person name="Bidet P."/>
            <person name="Bingen E."/>
            <person name="Bonacorsi S."/>
            <person name="Bouchier C."/>
            <person name="Bouvet O."/>
            <person name="Calteau A."/>
            <person name="Chiapello H."/>
            <person name="Clermont O."/>
            <person name="Cruveiller S."/>
            <person name="Danchin A."/>
            <person name="Diard M."/>
            <person name="Dossat C."/>
            <person name="Karoui M.E."/>
            <person name="Frapy E."/>
            <person name="Garry L."/>
            <person name="Ghigo J.M."/>
            <person name="Gilles A.M."/>
            <person name="Johnson J."/>
            <person name="Le Bouguenec C."/>
            <person name="Lescat M."/>
            <person name="Mangenot S."/>
            <person name="Martinez-Jehanne V."/>
            <person name="Matic I."/>
            <person name="Nassif X."/>
            <person name="Oztas S."/>
            <person name="Petit M.A."/>
            <person name="Pichon C."/>
            <person name="Rouy Z."/>
            <person name="Ruf C.S."/>
            <person name="Schneider D."/>
            <person name="Tourret J."/>
            <person name="Vacherie B."/>
            <person name="Vallenet D."/>
            <person name="Medigue C."/>
            <person name="Rocha E.P.C."/>
            <person name="Denamur E."/>
        </authorList>
    </citation>
    <scope>NUCLEOTIDE SEQUENCE [LARGE SCALE GENOMIC DNA]</scope>
    <source>
        <strain>55989 / EAEC</strain>
    </source>
</reference>
<feature type="chain" id="PRO_1000187657" description="Membrane protein insertase YidC">
    <location>
        <begin position="1"/>
        <end position="548"/>
    </location>
</feature>
<feature type="transmembrane region" description="Helical" evidence="1">
    <location>
        <begin position="6"/>
        <end position="26"/>
    </location>
</feature>
<feature type="transmembrane region" description="Helical" evidence="1">
    <location>
        <begin position="350"/>
        <end position="370"/>
    </location>
</feature>
<feature type="transmembrane region" description="Helical" evidence="1">
    <location>
        <begin position="420"/>
        <end position="440"/>
    </location>
</feature>
<feature type="transmembrane region" description="Helical" evidence="1">
    <location>
        <begin position="458"/>
        <end position="478"/>
    </location>
</feature>
<feature type="transmembrane region" description="Helical" evidence="1">
    <location>
        <begin position="499"/>
        <end position="519"/>
    </location>
</feature>
<feature type="region of interest" description="Disordered" evidence="2">
    <location>
        <begin position="28"/>
        <end position="55"/>
    </location>
</feature>
<feature type="compositionally biased region" description="Low complexity" evidence="2">
    <location>
        <begin position="30"/>
        <end position="50"/>
    </location>
</feature>
<protein>
    <recommendedName>
        <fullName evidence="1">Membrane protein insertase YidC</fullName>
    </recommendedName>
    <alternativeName>
        <fullName evidence="1">Foldase YidC</fullName>
    </alternativeName>
    <alternativeName>
        <fullName evidence="1">Membrane integrase YidC</fullName>
    </alternativeName>
    <alternativeName>
        <fullName evidence="1">Membrane protein YidC</fullName>
    </alternativeName>
</protein>
<evidence type="ECO:0000255" key="1">
    <source>
        <dbReference type="HAMAP-Rule" id="MF_01810"/>
    </source>
</evidence>
<evidence type="ECO:0000256" key="2">
    <source>
        <dbReference type="SAM" id="MobiDB-lite"/>
    </source>
</evidence>
<gene>
    <name evidence="1" type="primary">yidC</name>
    <name type="ordered locus">EC55989_4176</name>
</gene>
<name>YIDC_ECO55</name>
<dbReference type="EMBL" id="CU928145">
    <property type="protein sequence ID" value="CAV00764.1"/>
    <property type="molecule type" value="Genomic_DNA"/>
</dbReference>
<dbReference type="RefSeq" id="WP_000378258.1">
    <property type="nucleotide sequence ID" value="NZ_CP028304.1"/>
</dbReference>
<dbReference type="SMR" id="B7L849"/>
<dbReference type="GeneID" id="93778448"/>
<dbReference type="KEGG" id="eck:EC55989_4176"/>
<dbReference type="HOGENOM" id="CLU_016535_3_0_6"/>
<dbReference type="Proteomes" id="UP000000746">
    <property type="component" value="Chromosome"/>
</dbReference>
<dbReference type="GO" id="GO:0005886">
    <property type="term" value="C:plasma membrane"/>
    <property type="evidence" value="ECO:0007669"/>
    <property type="project" value="UniProtKB-SubCell"/>
</dbReference>
<dbReference type="GO" id="GO:0032977">
    <property type="term" value="F:membrane insertase activity"/>
    <property type="evidence" value="ECO:0007669"/>
    <property type="project" value="InterPro"/>
</dbReference>
<dbReference type="GO" id="GO:0051205">
    <property type="term" value="P:protein insertion into membrane"/>
    <property type="evidence" value="ECO:0007669"/>
    <property type="project" value="TreeGrafter"/>
</dbReference>
<dbReference type="GO" id="GO:0015031">
    <property type="term" value="P:protein transport"/>
    <property type="evidence" value="ECO:0007669"/>
    <property type="project" value="UniProtKB-KW"/>
</dbReference>
<dbReference type="CDD" id="cd20070">
    <property type="entry name" value="5TM_YidC_Alb3"/>
    <property type="match status" value="1"/>
</dbReference>
<dbReference type="CDD" id="cd19961">
    <property type="entry name" value="EcYidC-like_peri"/>
    <property type="match status" value="1"/>
</dbReference>
<dbReference type="FunFam" id="2.70.98.90:FF:000001">
    <property type="entry name" value="Membrane protein insertase YidC"/>
    <property type="match status" value="1"/>
</dbReference>
<dbReference type="Gene3D" id="2.70.98.90">
    <property type="match status" value="1"/>
</dbReference>
<dbReference type="HAMAP" id="MF_01810">
    <property type="entry name" value="YidC_type1"/>
    <property type="match status" value="1"/>
</dbReference>
<dbReference type="InterPro" id="IPR019998">
    <property type="entry name" value="Membr_insert_YidC"/>
</dbReference>
<dbReference type="InterPro" id="IPR028053">
    <property type="entry name" value="Membr_insert_YidC_N"/>
</dbReference>
<dbReference type="InterPro" id="IPR001708">
    <property type="entry name" value="YidC/ALB3/OXA1/COX18"/>
</dbReference>
<dbReference type="InterPro" id="IPR028055">
    <property type="entry name" value="YidC/Oxa/ALB_C"/>
</dbReference>
<dbReference type="InterPro" id="IPR047196">
    <property type="entry name" value="YidC_ALB_C"/>
</dbReference>
<dbReference type="InterPro" id="IPR038221">
    <property type="entry name" value="YidC_periplasmic_sf"/>
</dbReference>
<dbReference type="NCBIfam" id="NF002351">
    <property type="entry name" value="PRK01318.1-1"/>
    <property type="match status" value="1"/>
</dbReference>
<dbReference type="NCBIfam" id="NF002352">
    <property type="entry name" value="PRK01318.1-3"/>
    <property type="match status" value="1"/>
</dbReference>
<dbReference type="NCBIfam" id="NF002353">
    <property type="entry name" value="PRK01318.1-4"/>
    <property type="match status" value="1"/>
</dbReference>
<dbReference type="NCBIfam" id="TIGR03593">
    <property type="entry name" value="yidC_nterm"/>
    <property type="match status" value="1"/>
</dbReference>
<dbReference type="NCBIfam" id="TIGR03592">
    <property type="entry name" value="yidC_oxa1_cterm"/>
    <property type="match status" value="1"/>
</dbReference>
<dbReference type="PANTHER" id="PTHR12428:SF65">
    <property type="entry name" value="CYTOCHROME C OXIDASE ASSEMBLY PROTEIN COX18, MITOCHONDRIAL"/>
    <property type="match status" value="1"/>
</dbReference>
<dbReference type="PANTHER" id="PTHR12428">
    <property type="entry name" value="OXA1"/>
    <property type="match status" value="1"/>
</dbReference>
<dbReference type="Pfam" id="PF02096">
    <property type="entry name" value="60KD_IMP"/>
    <property type="match status" value="1"/>
</dbReference>
<dbReference type="Pfam" id="PF14849">
    <property type="entry name" value="YidC_periplas"/>
    <property type="match status" value="1"/>
</dbReference>
<dbReference type="PRINTS" id="PR00701">
    <property type="entry name" value="60KDINNERMP"/>
</dbReference>
<dbReference type="PRINTS" id="PR01900">
    <property type="entry name" value="YIDCPROTEIN"/>
</dbReference>
<keyword id="KW-0997">Cell inner membrane</keyword>
<keyword id="KW-1003">Cell membrane</keyword>
<keyword id="KW-0143">Chaperone</keyword>
<keyword id="KW-0472">Membrane</keyword>
<keyword id="KW-0653">Protein transport</keyword>
<keyword id="KW-1185">Reference proteome</keyword>
<keyword id="KW-0812">Transmembrane</keyword>
<keyword id="KW-1133">Transmembrane helix</keyword>
<keyword id="KW-0813">Transport</keyword>
<sequence>MDSQRNLLVIALLFVSFMIWQAWEQDKNPQPQAQQTTQTTTTAAGSAADQGVPASGQGKLISVKTDVLDLTINTRGGDVEQALLPAYPKELNSTQPFQLLETSPQFIYQAQSGLTGRDGPDNPANGPRPLYNVEKDAYVLAEGQNELQVPMTYTDAAGNTFTKTFVLKRGDYAVNVNYNVQNAGEKPLEISTFGQLKQSITLPPHLDTGSSNFALHTFRGAAYSTPDEKYEKYKFDTIADNENLNISSKGGWVAMLQQYFATAWIPHNDGTNNFYTANLGNGIAAIGYKSQPVLVQPGQTGAMNSTLWVGPEIQDKMAAVAPHLDLTVDYGWLWFISQPLFKLLKWIHSFVGNWGFSIIIITFIVRGIMYPLTKAQYTSMAKMRMLQPKIQAMRERLGDDKQRISQEMMALYKAEKVNPLGGCFPLLIQMPIFLALYYMLMGSVELRQAPFALWIHDLSAQDPYYILPILMGVTMFFIQKMSPTTVTDPMQQKIMTFMPVIFTVFFLWFPSGLVLYYIVSNLVTIIQQQLIYRGLEKRGLHSREKKKS</sequence>
<accession>B7L849</accession>
<comment type="function">
    <text evidence="1">Required for the insertion and/or proper folding and/or complex formation of integral membrane proteins into the membrane. Involved in integration of membrane proteins that insert both dependently and independently of the Sec translocase complex, as well as at least some lipoproteins. Aids folding of multispanning membrane proteins.</text>
</comment>
<comment type="subunit">
    <text evidence="1">Interacts with the Sec translocase complex via SecD. Specifically interacts with transmembrane segments of nascent integral membrane proteins during membrane integration.</text>
</comment>
<comment type="subcellular location">
    <subcellularLocation>
        <location evidence="1">Cell inner membrane</location>
        <topology evidence="1">Multi-pass membrane protein</topology>
    </subcellularLocation>
</comment>
<comment type="similarity">
    <text evidence="1">Belongs to the OXA1/ALB3/YidC family. Type 1 subfamily.</text>
</comment>
<organism>
    <name type="scientific">Escherichia coli (strain 55989 / EAEC)</name>
    <dbReference type="NCBI Taxonomy" id="585055"/>
    <lineage>
        <taxon>Bacteria</taxon>
        <taxon>Pseudomonadati</taxon>
        <taxon>Pseudomonadota</taxon>
        <taxon>Gammaproteobacteria</taxon>
        <taxon>Enterobacterales</taxon>
        <taxon>Enterobacteriaceae</taxon>
        <taxon>Escherichia</taxon>
    </lineage>
</organism>